<gene>
    <name evidence="1" type="primary">atpG</name>
    <name type="ordered locus">BQ12240</name>
</gene>
<dbReference type="EMBL" id="BX897700">
    <property type="protein sequence ID" value="CAF26683.1"/>
    <property type="molecule type" value="Genomic_DNA"/>
</dbReference>
<dbReference type="RefSeq" id="WP_011179853.1">
    <property type="nucleotide sequence ID" value="NC_005955.1"/>
</dbReference>
<dbReference type="SMR" id="Q6FYM2"/>
<dbReference type="KEGG" id="bqu:BQ12240"/>
<dbReference type="eggNOG" id="COG0224">
    <property type="taxonomic scope" value="Bacteria"/>
</dbReference>
<dbReference type="HOGENOM" id="CLU_050669_0_1_5"/>
<dbReference type="OrthoDB" id="9812769at2"/>
<dbReference type="Proteomes" id="UP000000597">
    <property type="component" value="Chromosome"/>
</dbReference>
<dbReference type="GO" id="GO:0005886">
    <property type="term" value="C:plasma membrane"/>
    <property type="evidence" value="ECO:0007669"/>
    <property type="project" value="UniProtKB-SubCell"/>
</dbReference>
<dbReference type="GO" id="GO:0045259">
    <property type="term" value="C:proton-transporting ATP synthase complex"/>
    <property type="evidence" value="ECO:0007669"/>
    <property type="project" value="UniProtKB-KW"/>
</dbReference>
<dbReference type="GO" id="GO:0005524">
    <property type="term" value="F:ATP binding"/>
    <property type="evidence" value="ECO:0007669"/>
    <property type="project" value="UniProtKB-UniRule"/>
</dbReference>
<dbReference type="GO" id="GO:0046933">
    <property type="term" value="F:proton-transporting ATP synthase activity, rotational mechanism"/>
    <property type="evidence" value="ECO:0007669"/>
    <property type="project" value="UniProtKB-UniRule"/>
</dbReference>
<dbReference type="GO" id="GO:0042777">
    <property type="term" value="P:proton motive force-driven plasma membrane ATP synthesis"/>
    <property type="evidence" value="ECO:0007669"/>
    <property type="project" value="UniProtKB-UniRule"/>
</dbReference>
<dbReference type="CDD" id="cd12151">
    <property type="entry name" value="F1-ATPase_gamma"/>
    <property type="match status" value="1"/>
</dbReference>
<dbReference type="FunFam" id="1.10.287.80:FF:000001">
    <property type="entry name" value="ATP synthase gamma chain"/>
    <property type="match status" value="1"/>
</dbReference>
<dbReference type="FunFam" id="1.10.287.80:FF:000003">
    <property type="entry name" value="ATP synthase gamma chain, chloroplastic"/>
    <property type="match status" value="1"/>
</dbReference>
<dbReference type="Gene3D" id="3.40.1380.10">
    <property type="match status" value="1"/>
</dbReference>
<dbReference type="Gene3D" id="1.10.287.80">
    <property type="entry name" value="ATP synthase, gamma subunit, helix hairpin domain"/>
    <property type="match status" value="1"/>
</dbReference>
<dbReference type="HAMAP" id="MF_00815">
    <property type="entry name" value="ATP_synth_gamma_bact"/>
    <property type="match status" value="1"/>
</dbReference>
<dbReference type="InterPro" id="IPR035968">
    <property type="entry name" value="ATP_synth_F1_ATPase_gsu"/>
</dbReference>
<dbReference type="InterPro" id="IPR000131">
    <property type="entry name" value="ATP_synth_F1_gsu"/>
</dbReference>
<dbReference type="InterPro" id="IPR023632">
    <property type="entry name" value="ATP_synth_F1_gsu_CS"/>
</dbReference>
<dbReference type="NCBIfam" id="TIGR01146">
    <property type="entry name" value="ATPsyn_F1gamma"/>
    <property type="match status" value="1"/>
</dbReference>
<dbReference type="NCBIfam" id="NF004146">
    <property type="entry name" value="PRK05621.1-4"/>
    <property type="match status" value="1"/>
</dbReference>
<dbReference type="PANTHER" id="PTHR11693">
    <property type="entry name" value="ATP SYNTHASE GAMMA CHAIN"/>
    <property type="match status" value="1"/>
</dbReference>
<dbReference type="PANTHER" id="PTHR11693:SF22">
    <property type="entry name" value="ATP SYNTHASE SUBUNIT GAMMA, MITOCHONDRIAL"/>
    <property type="match status" value="1"/>
</dbReference>
<dbReference type="Pfam" id="PF00231">
    <property type="entry name" value="ATP-synt"/>
    <property type="match status" value="1"/>
</dbReference>
<dbReference type="PIRSF" id="PIRSF039089">
    <property type="entry name" value="ATP_synthase_gamma"/>
    <property type="match status" value="1"/>
</dbReference>
<dbReference type="PRINTS" id="PR00126">
    <property type="entry name" value="ATPASEGAMMA"/>
</dbReference>
<dbReference type="SUPFAM" id="SSF52943">
    <property type="entry name" value="ATP synthase (F1-ATPase), gamma subunit"/>
    <property type="match status" value="1"/>
</dbReference>
<dbReference type="PROSITE" id="PS00153">
    <property type="entry name" value="ATPASE_GAMMA"/>
    <property type="match status" value="1"/>
</dbReference>
<sequence length="303" mass="33199">MASLKDLRDRIASVKATQKITKAMQMVAAARLHRVQEAAQSARPYAQRMAAILANVATDVDTIDVPPLMRGTGRNDVHLLVVCTAERGLCGAFNMQIARRARQQIKALLSAGKIVKILTVGKKGADILSRDYKALMIDHIDLRSVKRVGFAEAAIISQKIIDLFDKDTFDVCTLFYSEFVSVINQRPVAFGLIPMGSPKGAVEAEDVTQKVDENKNLQSIVYDYEPDVASLLEELVPRNLSVQIFQALLENVAGEMGAKVTAMDNASRNAGEMINKLTVAYNRQRQAQITTELIEIIAGAEAL</sequence>
<comment type="function">
    <text evidence="1">Produces ATP from ADP in the presence of a proton gradient across the membrane. The gamma chain is believed to be important in regulating ATPase activity and the flow of protons through the CF(0) complex.</text>
</comment>
<comment type="subunit">
    <text evidence="1">F-type ATPases have 2 components, CF(1) - the catalytic core - and CF(0) - the membrane proton channel. CF(1) has five subunits: alpha(3), beta(3), gamma(1), delta(1), epsilon(1). CF(0) has three main subunits: a, b and c.</text>
</comment>
<comment type="subcellular location">
    <subcellularLocation>
        <location evidence="1">Cell inner membrane</location>
        <topology evidence="1">Peripheral membrane protein</topology>
    </subcellularLocation>
</comment>
<comment type="similarity">
    <text evidence="1">Belongs to the ATPase gamma chain family.</text>
</comment>
<keyword id="KW-0066">ATP synthesis</keyword>
<keyword id="KW-0997">Cell inner membrane</keyword>
<keyword id="KW-1003">Cell membrane</keyword>
<keyword id="KW-0139">CF(1)</keyword>
<keyword id="KW-0375">Hydrogen ion transport</keyword>
<keyword id="KW-0406">Ion transport</keyword>
<keyword id="KW-0472">Membrane</keyword>
<keyword id="KW-0813">Transport</keyword>
<organism>
    <name type="scientific">Bartonella quintana (strain Toulouse)</name>
    <name type="common">Rochalimaea quintana</name>
    <dbReference type="NCBI Taxonomy" id="283165"/>
    <lineage>
        <taxon>Bacteria</taxon>
        <taxon>Pseudomonadati</taxon>
        <taxon>Pseudomonadota</taxon>
        <taxon>Alphaproteobacteria</taxon>
        <taxon>Hyphomicrobiales</taxon>
        <taxon>Bartonellaceae</taxon>
        <taxon>Bartonella</taxon>
    </lineage>
</organism>
<name>ATPG_BARQU</name>
<accession>Q6FYM2</accession>
<reference key="1">
    <citation type="journal article" date="2004" name="Proc. Natl. Acad. Sci. U.S.A.">
        <title>The louse-borne human pathogen Bartonella quintana is a genomic derivative of the zoonotic agent Bartonella henselae.</title>
        <authorList>
            <person name="Alsmark U.C.M."/>
            <person name="Frank A.C."/>
            <person name="Karlberg E.O."/>
            <person name="Legault B.-A."/>
            <person name="Ardell D.H."/>
            <person name="Canbaeck B."/>
            <person name="Eriksson A.-S."/>
            <person name="Naeslund A.K."/>
            <person name="Handley S.A."/>
            <person name="Huvet M."/>
            <person name="La Scola B."/>
            <person name="Holmberg M."/>
            <person name="Andersson S.G.E."/>
        </authorList>
    </citation>
    <scope>NUCLEOTIDE SEQUENCE [LARGE SCALE GENOMIC DNA]</scope>
    <source>
        <strain>Toulouse</strain>
    </source>
</reference>
<protein>
    <recommendedName>
        <fullName evidence="1">ATP synthase gamma chain</fullName>
    </recommendedName>
    <alternativeName>
        <fullName evidence="1">ATP synthase F1 sector gamma subunit</fullName>
    </alternativeName>
    <alternativeName>
        <fullName evidence="1">F-ATPase gamma subunit</fullName>
    </alternativeName>
</protein>
<feature type="chain" id="PRO_0000073240" description="ATP synthase gamma chain">
    <location>
        <begin position="1"/>
        <end position="303"/>
    </location>
</feature>
<proteinExistence type="inferred from homology"/>
<evidence type="ECO:0000255" key="1">
    <source>
        <dbReference type="HAMAP-Rule" id="MF_00815"/>
    </source>
</evidence>